<keyword id="KW-0106">Calcium</keyword>
<keyword id="KW-0175">Coiled coil</keyword>
<keyword id="KW-0176">Collagen</keyword>
<keyword id="KW-1018">Complement activation lectin pathway</keyword>
<keyword id="KW-0180">Complement pathway</keyword>
<keyword id="KW-1015">Disulfide bond</keyword>
<keyword id="KW-0379">Hydroxylation</keyword>
<keyword id="KW-0391">Immunity</keyword>
<keyword id="KW-0399">Innate immunity</keyword>
<keyword id="KW-0430">Lectin</keyword>
<keyword id="KW-0465">Mannose-binding</keyword>
<keyword id="KW-1185">Reference proteome</keyword>
<keyword id="KW-0677">Repeat</keyword>
<keyword id="KW-0964">Secreted</keyword>
<keyword id="KW-0732">Signal</keyword>
<gene>
    <name type="primary">MBL2</name>
</gene>
<proteinExistence type="inferred from homology"/>
<name>MBL2_MACFA</name>
<accession>Q66S50</accession>
<sequence length="248" mass="26314">MSLFPSLTLLLLSVVATSYSETVTCEDSQKICPAVIACNSPGINGFPGKDGRDGTKGEKGEPGQGLRGLQGPPGKLGPPGNPGSSGSPGPKGQKGDPGESPDCESSLAASERKALQTEMARIKKWLTFSLGRQVGNKFFLTNGEMMTFDKVKALCAEFQASVATPRNAAENRAIQNLIKEEAFLGITDENTEGEFVDLTGNKLTYTNWNDGEPNNAGSNEDCVLLLKNGKWNDIPCSSSHLALCEFPI</sequence>
<organism>
    <name type="scientific">Macaca fascicularis</name>
    <name type="common">Crab-eating macaque</name>
    <name type="synonym">Cynomolgus monkey</name>
    <dbReference type="NCBI Taxonomy" id="9541"/>
    <lineage>
        <taxon>Eukaryota</taxon>
        <taxon>Metazoa</taxon>
        <taxon>Chordata</taxon>
        <taxon>Craniata</taxon>
        <taxon>Vertebrata</taxon>
        <taxon>Euteleostomi</taxon>
        <taxon>Mammalia</taxon>
        <taxon>Eutheria</taxon>
        <taxon>Euarchontoglires</taxon>
        <taxon>Primates</taxon>
        <taxon>Haplorrhini</taxon>
        <taxon>Catarrhini</taxon>
        <taxon>Cercopithecidae</taxon>
        <taxon>Cercopithecinae</taxon>
        <taxon>Macaca</taxon>
    </lineage>
</organism>
<reference key="1">
    <citation type="journal article" date="2004" name="Genes Immun.">
        <title>Evolution of the mannose-binding lectin gene in primates.</title>
        <authorList>
            <person name="Verga Falzacappa M.V."/>
            <person name="Segat L."/>
            <person name="Puppini B."/>
            <person name="Amoroso A."/>
            <person name="Crovella S."/>
        </authorList>
    </citation>
    <scope>NUCLEOTIDE SEQUENCE [GENOMIC DNA]</scope>
</reference>
<feature type="signal peptide" evidence="1">
    <location>
        <begin position="1"/>
        <end position="20"/>
    </location>
</feature>
<feature type="chain" id="PRO_0000017404" description="Mannose-binding protein C">
    <location>
        <begin position="21"/>
        <end position="248"/>
    </location>
</feature>
<feature type="domain" description="Collagen-like">
    <location>
        <begin position="42"/>
        <end position="99"/>
    </location>
</feature>
<feature type="domain" description="C-type lectin" evidence="2">
    <location>
        <begin position="134"/>
        <end position="245"/>
    </location>
</feature>
<feature type="region of interest" description="Disordered" evidence="3">
    <location>
        <begin position="43"/>
        <end position="111"/>
    </location>
</feature>
<feature type="coiled-coil region" evidence="1">
    <location>
        <begin position="112"/>
        <end position="130"/>
    </location>
</feature>
<feature type="compositionally biased region" description="Basic and acidic residues" evidence="3">
    <location>
        <begin position="49"/>
        <end position="61"/>
    </location>
</feature>
<feature type="compositionally biased region" description="Low complexity" evidence="3">
    <location>
        <begin position="82"/>
        <end position="91"/>
    </location>
</feature>
<feature type="modified residue" description="4-hydroxyproline" evidence="1">
    <location>
        <position position="47"/>
    </location>
</feature>
<feature type="modified residue" description="4-hydroxyproline" evidence="1">
    <location>
        <position position="73"/>
    </location>
</feature>
<feature type="modified residue" description="4-hydroxyproline" evidence="1">
    <location>
        <position position="79"/>
    </location>
</feature>
<feature type="modified residue" description="4-hydroxyproline" evidence="1">
    <location>
        <position position="82"/>
    </location>
</feature>
<feature type="modified residue" description="4-hydroxyproline" evidence="1">
    <location>
        <position position="88"/>
    </location>
</feature>
<feature type="disulfide bond" evidence="2">
    <location>
        <begin position="155"/>
        <end position="244"/>
    </location>
</feature>
<feature type="disulfide bond" evidence="2">
    <location>
        <begin position="222"/>
        <end position="236"/>
    </location>
</feature>
<protein>
    <recommendedName>
        <fullName>Mannose-binding protein C</fullName>
        <shortName>MBP-C</shortName>
    </recommendedName>
    <alternativeName>
        <fullName>MBP1</fullName>
    </alternativeName>
    <alternativeName>
        <fullName>Mannan-binding protein</fullName>
    </alternativeName>
    <alternativeName>
        <fullName>Mannose-binding lectin</fullName>
    </alternativeName>
</protein>
<dbReference type="EMBL" id="AY707511">
    <property type="protein sequence ID" value="AAU11297.1"/>
    <property type="molecule type" value="Genomic_DNA"/>
</dbReference>
<dbReference type="EMBL" id="AY707508">
    <property type="protein sequence ID" value="AAU11297.1"/>
    <property type="status" value="JOINED"/>
    <property type="molecule type" value="Genomic_DNA"/>
</dbReference>
<dbReference type="EMBL" id="AY707509">
    <property type="protein sequence ID" value="AAU11297.1"/>
    <property type="status" value="JOINED"/>
    <property type="molecule type" value="Genomic_DNA"/>
</dbReference>
<dbReference type="EMBL" id="AY707510">
    <property type="protein sequence ID" value="AAU11297.1"/>
    <property type="status" value="JOINED"/>
    <property type="molecule type" value="Genomic_DNA"/>
</dbReference>
<dbReference type="RefSeq" id="XP_005565900.1">
    <property type="nucleotide sequence ID" value="XM_005565843.4"/>
</dbReference>
<dbReference type="RefSeq" id="XP_005565901.1">
    <property type="nucleotide sequence ID" value="XM_005565844.2"/>
</dbReference>
<dbReference type="RefSeq" id="XP_065377164.1">
    <property type="nucleotide sequence ID" value="XM_065521092.1"/>
</dbReference>
<dbReference type="SMR" id="Q66S50"/>
<dbReference type="STRING" id="9541.ENSMFAP00000018031"/>
<dbReference type="GeneID" id="102120567"/>
<dbReference type="CTD" id="4153"/>
<dbReference type="eggNOG" id="KOG4297">
    <property type="taxonomic scope" value="Eukaryota"/>
</dbReference>
<dbReference type="Proteomes" id="UP000233100">
    <property type="component" value="Unplaced"/>
</dbReference>
<dbReference type="GO" id="GO:0005581">
    <property type="term" value="C:collagen trimer"/>
    <property type="evidence" value="ECO:0007669"/>
    <property type="project" value="UniProtKB-KW"/>
</dbReference>
<dbReference type="GO" id="GO:0005615">
    <property type="term" value="C:extracellular space"/>
    <property type="evidence" value="ECO:0007669"/>
    <property type="project" value="TreeGrafter"/>
</dbReference>
<dbReference type="GO" id="GO:0005771">
    <property type="term" value="C:multivesicular body"/>
    <property type="evidence" value="ECO:0007669"/>
    <property type="project" value="TreeGrafter"/>
</dbReference>
<dbReference type="GO" id="GO:0005537">
    <property type="term" value="F:D-mannose binding"/>
    <property type="evidence" value="ECO:0007669"/>
    <property type="project" value="UniProtKB-KW"/>
</dbReference>
<dbReference type="GO" id="GO:0006958">
    <property type="term" value="P:complement activation, classical pathway"/>
    <property type="evidence" value="ECO:0007669"/>
    <property type="project" value="UniProtKB-KW"/>
</dbReference>
<dbReference type="GO" id="GO:0001867">
    <property type="term" value="P:complement activation, lectin pathway"/>
    <property type="evidence" value="ECO:0007669"/>
    <property type="project" value="UniProtKB-KW"/>
</dbReference>
<dbReference type="CDD" id="cd03591">
    <property type="entry name" value="CLECT_collectin_like"/>
    <property type="match status" value="1"/>
</dbReference>
<dbReference type="FunFam" id="3.10.100.10:FF:000088">
    <property type="entry name" value="Mannose-binding protein A"/>
    <property type="match status" value="1"/>
</dbReference>
<dbReference type="Gene3D" id="3.10.100.10">
    <property type="entry name" value="Mannose-Binding Protein A, subunit A"/>
    <property type="match status" value="1"/>
</dbReference>
<dbReference type="InterPro" id="IPR001304">
    <property type="entry name" value="C-type_lectin-like"/>
</dbReference>
<dbReference type="InterPro" id="IPR016186">
    <property type="entry name" value="C-type_lectin-like/link_sf"/>
</dbReference>
<dbReference type="InterPro" id="IPR018378">
    <property type="entry name" value="C-type_lectin_CS"/>
</dbReference>
<dbReference type="InterPro" id="IPR051077">
    <property type="entry name" value="Ca-dependent_lectin"/>
</dbReference>
<dbReference type="InterPro" id="IPR008160">
    <property type="entry name" value="Collagen"/>
</dbReference>
<dbReference type="InterPro" id="IPR033990">
    <property type="entry name" value="Collectin_CTLD"/>
</dbReference>
<dbReference type="InterPro" id="IPR016187">
    <property type="entry name" value="CTDL_fold"/>
</dbReference>
<dbReference type="PANTHER" id="PTHR24024:SF34">
    <property type="entry name" value="MANNOSE-BINDING PROTEIN C"/>
    <property type="match status" value="1"/>
</dbReference>
<dbReference type="PANTHER" id="PTHR24024">
    <property type="entry name" value="PULMONARY SURFACTANT-ASSOCIATED PROTEIN A"/>
    <property type="match status" value="1"/>
</dbReference>
<dbReference type="Pfam" id="PF01391">
    <property type="entry name" value="Collagen"/>
    <property type="match status" value="1"/>
</dbReference>
<dbReference type="Pfam" id="PF00059">
    <property type="entry name" value="Lectin_C"/>
    <property type="match status" value="1"/>
</dbReference>
<dbReference type="SMART" id="SM00034">
    <property type="entry name" value="CLECT"/>
    <property type="match status" value="1"/>
</dbReference>
<dbReference type="SUPFAM" id="SSF56436">
    <property type="entry name" value="C-type lectin-like"/>
    <property type="match status" value="1"/>
</dbReference>
<dbReference type="SUPFAM" id="SSF57944">
    <property type="entry name" value="Triple coiled coil domain of C-type lectins"/>
    <property type="match status" value="1"/>
</dbReference>
<dbReference type="PROSITE" id="PS00615">
    <property type="entry name" value="C_TYPE_LECTIN_1"/>
    <property type="match status" value="1"/>
</dbReference>
<dbReference type="PROSITE" id="PS50041">
    <property type="entry name" value="C_TYPE_LECTIN_2"/>
    <property type="match status" value="1"/>
</dbReference>
<evidence type="ECO:0000250" key="1"/>
<evidence type="ECO:0000255" key="2">
    <source>
        <dbReference type="PROSITE-ProRule" id="PRU00040"/>
    </source>
</evidence>
<evidence type="ECO:0000256" key="3">
    <source>
        <dbReference type="SAM" id="MobiDB-lite"/>
    </source>
</evidence>
<comment type="function">
    <text evidence="1">Calcium-dependent lectin involved in innate immune defense. Binds mannose, fucose and N-acetylglucosamine on different microorganisms and activates the lectin complement pathway. Binds to late apoptotic cells, as well as to apoptotic blebs and to necrotic cells, but not to early apoptotic cells, facilitating their uptake by macrophages (By similarity).</text>
</comment>
<comment type="subunit">
    <text evidence="1">Oligomeric complex of 3 or more homotrimers. Interacts with MASP1 and MASP2 (By similarity). Interacts with MEP1A and MEP1B and may inhibit their catalytic activity (By similarity).</text>
</comment>
<comment type="subcellular location">
    <subcellularLocation>
        <location evidence="1">Secreted</location>
    </subcellularLocation>
</comment>
<comment type="domain">
    <text evidence="1">The coiled-coil domain mediates trimerization.</text>
</comment>
<comment type="PTM">
    <text evidence="1">Hydroxylation on proline residues within the sequence motif, GXPG, is most likely to be 4-hydroxy as this fits the requirement for 4-hydroxylation in vertebrates.</text>
</comment>